<protein>
    <recommendedName>
        <fullName evidence="1">3-phosphoshikimate 1-carboxyvinyltransferase</fullName>
        <ecNumber evidence="1">2.5.1.19</ecNumber>
    </recommendedName>
    <alternativeName>
        <fullName evidence="1">5-enolpyruvylshikimate-3-phosphate synthase</fullName>
        <shortName evidence="1">EPSP synthase</shortName>
        <shortName evidence="1">EPSPS</shortName>
    </alternativeName>
</protein>
<sequence length="443" mass="46192">MSHSAEPLPMTARRSGPLTGEAQVPGDKSISHRALILGALSVGETHITGLLEGQDVLDTAAAMRAFGAQVERLGEGEWRVNGVGVGGFAEPEGVIDCGNSGTGVRLIMGAMATTPITATFTGDASLSRRPMGRVTDPLELFGCEVTAREGKRLPLTIKGASEPVPVRYKTPVASAQIKSAVLLAGLNAPGETVVIEAEPTRDHTERMLAGFGAAITTETTAEGHVIILKGRPELKPQPVAVPRDPSSAAFPVAAALIVPGSEIRVPGVSRNPTRDGLYVTLLEMGADIRFENQREEGGEPVADLVVRHGPLKGVTVPAERAASMIDEFPILSVIACFAEGTTVMQGVHELRVKESDRIDAMAVGLRANGAEVVDTQDTMTVHGKGGLDGGATCATHLDHRIAMSFLVAGLASHQPISVDDGGPIATSFPDFLPLMRGLGAQID</sequence>
<feature type="chain" id="PRO_1000058605" description="3-phosphoshikimate 1-carboxyvinyltransferase">
    <location>
        <begin position="1"/>
        <end position="443"/>
    </location>
</feature>
<feature type="region of interest" description="Disordered" evidence="2">
    <location>
        <begin position="1"/>
        <end position="25"/>
    </location>
</feature>
<feature type="active site" description="Proton acceptor" evidence="1">
    <location>
        <position position="326"/>
    </location>
</feature>
<feature type="binding site" evidence="1">
    <location>
        <position position="28"/>
    </location>
    <ligand>
        <name>3-phosphoshikimate</name>
        <dbReference type="ChEBI" id="CHEBI:145989"/>
    </ligand>
</feature>
<feature type="binding site" evidence="1">
    <location>
        <position position="28"/>
    </location>
    <ligand>
        <name>phosphoenolpyruvate</name>
        <dbReference type="ChEBI" id="CHEBI:58702"/>
    </ligand>
</feature>
<feature type="binding site" evidence="1">
    <location>
        <position position="29"/>
    </location>
    <ligand>
        <name>3-phosphoshikimate</name>
        <dbReference type="ChEBI" id="CHEBI:145989"/>
    </ligand>
</feature>
<feature type="binding site" evidence="1">
    <location>
        <position position="33"/>
    </location>
    <ligand>
        <name>3-phosphoshikimate</name>
        <dbReference type="ChEBI" id="CHEBI:145989"/>
    </ligand>
</feature>
<feature type="binding site" evidence="1">
    <location>
        <position position="101"/>
    </location>
    <ligand>
        <name>phosphoenolpyruvate</name>
        <dbReference type="ChEBI" id="CHEBI:58702"/>
    </ligand>
</feature>
<feature type="binding site" evidence="1">
    <location>
        <position position="129"/>
    </location>
    <ligand>
        <name>phosphoenolpyruvate</name>
        <dbReference type="ChEBI" id="CHEBI:58702"/>
    </ligand>
</feature>
<feature type="binding site" evidence="1">
    <location>
        <position position="174"/>
    </location>
    <ligand>
        <name>3-phosphoshikimate</name>
        <dbReference type="ChEBI" id="CHEBI:145989"/>
    </ligand>
</feature>
<feature type="binding site" evidence="1">
    <location>
        <position position="176"/>
    </location>
    <ligand>
        <name>3-phosphoshikimate</name>
        <dbReference type="ChEBI" id="CHEBI:145989"/>
    </ligand>
</feature>
<feature type="binding site" evidence="1">
    <location>
        <position position="176"/>
    </location>
    <ligand>
        <name>phosphoenolpyruvate</name>
        <dbReference type="ChEBI" id="CHEBI:58702"/>
    </ligand>
</feature>
<feature type="binding site" evidence="1">
    <location>
        <position position="326"/>
    </location>
    <ligand>
        <name>3-phosphoshikimate</name>
        <dbReference type="ChEBI" id="CHEBI:145989"/>
    </ligand>
</feature>
<feature type="binding site" evidence="1">
    <location>
        <position position="353"/>
    </location>
    <ligand>
        <name>3-phosphoshikimate</name>
        <dbReference type="ChEBI" id="CHEBI:145989"/>
    </ligand>
</feature>
<feature type="binding site" evidence="1">
    <location>
        <position position="357"/>
    </location>
    <ligand>
        <name>phosphoenolpyruvate</name>
        <dbReference type="ChEBI" id="CHEBI:58702"/>
    </ligand>
</feature>
<feature type="binding site" evidence="1">
    <location>
        <position position="400"/>
    </location>
    <ligand>
        <name>phosphoenolpyruvate</name>
        <dbReference type="ChEBI" id="CHEBI:58702"/>
    </ligand>
</feature>
<accession>A1B474</accession>
<organism>
    <name type="scientific">Paracoccus denitrificans (strain Pd 1222)</name>
    <dbReference type="NCBI Taxonomy" id="318586"/>
    <lineage>
        <taxon>Bacteria</taxon>
        <taxon>Pseudomonadati</taxon>
        <taxon>Pseudomonadota</taxon>
        <taxon>Alphaproteobacteria</taxon>
        <taxon>Rhodobacterales</taxon>
        <taxon>Paracoccaceae</taxon>
        <taxon>Paracoccus</taxon>
    </lineage>
</organism>
<keyword id="KW-0028">Amino-acid biosynthesis</keyword>
<keyword id="KW-0057">Aromatic amino acid biosynthesis</keyword>
<keyword id="KW-0963">Cytoplasm</keyword>
<keyword id="KW-1185">Reference proteome</keyword>
<keyword id="KW-0808">Transferase</keyword>
<evidence type="ECO:0000255" key="1">
    <source>
        <dbReference type="HAMAP-Rule" id="MF_00210"/>
    </source>
</evidence>
<evidence type="ECO:0000256" key="2">
    <source>
        <dbReference type="SAM" id="MobiDB-lite"/>
    </source>
</evidence>
<reference key="1">
    <citation type="submission" date="2006-12" db="EMBL/GenBank/DDBJ databases">
        <title>Complete sequence of chromosome 1 of Paracoccus denitrificans PD1222.</title>
        <authorList>
            <person name="Copeland A."/>
            <person name="Lucas S."/>
            <person name="Lapidus A."/>
            <person name="Barry K."/>
            <person name="Detter J.C."/>
            <person name="Glavina del Rio T."/>
            <person name="Hammon N."/>
            <person name="Israni S."/>
            <person name="Dalin E."/>
            <person name="Tice H."/>
            <person name="Pitluck S."/>
            <person name="Munk A.C."/>
            <person name="Brettin T."/>
            <person name="Bruce D."/>
            <person name="Han C."/>
            <person name="Tapia R."/>
            <person name="Gilna P."/>
            <person name="Schmutz J."/>
            <person name="Larimer F."/>
            <person name="Land M."/>
            <person name="Hauser L."/>
            <person name="Kyrpides N."/>
            <person name="Lykidis A."/>
            <person name="Spiro S."/>
            <person name="Richardson D.J."/>
            <person name="Moir J.W.B."/>
            <person name="Ferguson S.J."/>
            <person name="van Spanning R.J.M."/>
            <person name="Richardson P."/>
        </authorList>
    </citation>
    <scope>NUCLEOTIDE SEQUENCE [LARGE SCALE GENOMIC DNA]</scope>
    <source>
        <strain>Pd 1222</strain>
    </source>
</reference>
<gene>
    <name evidence="1" type="primary">aroA</name>
    <name type="ordered locus">Pden_2226</name>
</gene>
<proteinExistence type="inferred from homology"/>
<name>AROA_PARDP</name>
<dbReference type="EC" id="2.5.1.19" evidence="1"/>
<dbReference type="EMBL" id="CP000489">
    <property type="protein sequence ID" value="ABL70318.1"/>
    <property type="molecule type" value="Genomic_DNA"/>
</dbReference>
<dbReference type="RefSeq" id="WP_011748513.1">
    <property type="nucleotide sequence ID" value="NC_008686.1"/>
</dbReference>
<dbReference type="SMR" id="A1B474"/>
<dbReference type="STRING" id="318586.Pden_2226"/>
<dbReference type="EnsemblBacteria" id="ABL70318">
    <property type="protein sequence ID" value="ABL70318"/>
    <property type="gene ID" value="Pden_2226"/>
</dbReference>
<dbReference type="GeneID" id="93450624"/>
<dbReference type="KEGG" id="pde:Pden_2226"/>
<dbReference type="eggNOG" id="COG0128">
    <property type="taxonomic scope" value="Bacteria"/>
</dbReference>
<dbReference type="HOGENOM" id="CLU_024321_0_1_5"/>
<dbReference type="OrthoDB" id="9809920at2"/>
<dbReference type="UniPathway" id="UPA00053">
    <property type="reaction ID" value="UER00089"/>
</dbReference>
<dbReference type="Proteomes" id="UP000000361">
    <property type="component" value="Chromosome 1"/>
</dbReference>
<dbReference type="GO" id="GO:0005737">
    <property type="term" value="C:cytoplasm"/>
    <property type="evidence" value="ECO:0007669"/>
    <property type="project" value="UniProtKB-SubCell"/>
</dbReference>
<dbReference type="GO" id="GO:0003866">
    <property type="term" value="F:3-phosphoshikimate 1-carboxyvinyltransferase activity"/>
    <property type="evidence" value="ECO:0007669"/>
    <property type="project" value="UniProtKB-UniRule"/>
</dbReference>
<dbReference type="GO" id="GO:0008652">
    <property type="term" value="P:amino acid biosynthetic process"/>
    <property type="evidence" value="ECO:0007669"/>
    <property type="project" value="UniProtKB-KW"/>
</dbReference>
<dbReference type="GO" id="GO:0009073">
    <property type="term" value="P:aromatic amino acid family biosynthetic process"/>
    <property type="evidence" value="ECO:0007669"/>
    <property type="project" value="UniProtKB-KW"/>
</dbReference>
<dbReference type="GO" id="GO:0009423">
    <property type="term" value="P:chorismate biosynthetic process"/>
    <property type="evidence" value="ECO:0007669"/>
    <property type="project" value="UniProtKB-UniRule"/>
</dbReference>
<dbReference type="CDD" id="cd01556">
    <property type="entry name" value="EPSP_synthase"/>
    <property type="match status" value="1"/>
</dbReference>
<dbReference type="FunFam" id="3.65.10.10:FF:000005">
    <property type="entry name" value="3-phosphoshikimate 1-carboxyvinyltransferase"/>
    <property type="match status" value="1"/>
</dbReference>
<dbReference type="Gene3D" id="3.65.10.10">
    <property type="entry name" value="Enolpyruvate transferase domain"/>
    <property type="match status" value="2"/>
</dbReference>
<dbReference type="HAMAP" id="MF_00210">
    <property type="entry name" value="EPSP_synth"/>
    <property type="match status" value="1"/>
</dbReference>
<dbReference type="InterPro" id="IPR001986">
    <property type="entry name" value="Enolpyruvate_Tfrase_dom"/>
</dbReference>
<dbReference type="InterPro" id="IPR036968">
    <property type="entry name" value="Enolpyruvate_Tfrase_sf"/>
</dbReference>
<dbReference type="InterPro" id="IPR006264">
    <property type="entry name" value="EPSP_synthase"/>
</dbReference>
<dbReference type="InterPro" id="IPR023193">
    <property type="entry name" value="EPSP_synthase_CS"/>
</dbReference>
<dbReference type="InterPro" id="IPR013792">
    <property type="entry name" value="RNA3'P_cycl/enolpyr_Trfase_a/b"/>
</dbReference>
<dbReference type="NCBIfam" id="TIGR01356">
    <property type="entry name" value="aroA"/>
    <property type="match status" value="1"/>
</dbReference>
<dbReference type="PANTHER" id="PTHR21090">
    <property type="entry name" value="AROM/DEHYDROQUINATE SYNTHASE"/>
    <property type="match status" value="1"/>
</dbReference>
<dbReference type="PANTHER" id="PTHR21090:SF5">
    <property type="entry name" value="PENTAFUNCTIONAL AROM POLYPEPTIDE"/>
    <property type="match status" value="1"/>
</dbReference>
<dbReference type="Pfam" id="PF00275">
    <property type="entry name" value="EPSP_synthase"/>
    <property type="match status" value="1"/>
</dbReference>
<dbReference type="PIRSF" id="PIRSF000505">
    <property type="entry name" value="EPSPS"/>
    <property type="match status" value="1"/>
</dbReference>
<dbReference type="SUPFAM" id="SSF55205">
    <property type="entry name" value="EPT/RTPC-like"/>
    <property type="match status" value="1"/>
</dbReference>
<dbReference type="PROSITE" id="PS00104">
    <property type="entry name" value="EPSP_SYNTHASE_1"/>
    <property type="match status" value="1"/>
</dbReference>
<dbReference type="PROSITE" id="PS00885">
    <property type="entry name" value="EPSP_SYNTHASE_2"/>
    <property type="match status" value="1"/>
</dbReference>
<comment type="function">
    <text evidence="1">Catalyzes the transfer of the enolpyruvyl moiety of phosphoenolpyruvate (PEP) to the 5-hydroxyl of shikimate-3-phosphate (S3P) to produce enolpyruvyl shikimate-3-phosphate and inorganic phosphate.</text>
</comment>
<comment type="catalytic activity">
    <reaction evidence="1">
        <text>3-phosphoshikimate + phosphoenolpyruvate = 5-O-(1-carboxyvinyl)-3-phosphoshikimate + phosphate</text>
        <dbReference type="Rhea" id="RHEA:21256"/>
        <dbReference type="ChEBI" id="CHEBI:43474"/>
        <dbReference type="ChEBI" id="CHEBI:57701"/>
        <dbReference type="ChEBI" id="CHEBI:58702"/>
        <dbReference type="ChEBI" id="CHEBI:145989"/>
        <dbReference type="EC" id="2.5.1.19"/>
    </reaction>
    <physiologicalReaction direction="left-to-right" evidence="1">
        <dbReference type="Rhea" id="RHEA:21257"/>
    </physiologicalReaction>
</comment>
<comment type="pathway">
    <text evidence="1">Metabolic intermediate biosynthesis; chorismate biosynthesis; chorismate from D-erythrose 4-phosphate and phosphoenolpyruvate: step 6/7.</text>
</comment>
<comment type="subunit">
    <text evidence="1">Monomer.</text>
</comment>
<comment type="subcellular location">
    <subcellularLocation>
        <location evidence="1">Cytoplasm</location>
    </subcellularLocation>
</comment>
<comment type="similarity">
    <text evidence="1">Belongs to the EPSP synthase family.</text>
</comment>